<sequence>MEFVMKQALGGATKDMGKMLGGDEEKDPDAAKKEEERQEALRQAEEERKAKYAKMEAEREVMRQGIRDKYGIKKKEEREAEAQAAMEANSEGSLTRPKKAIPPGCGDEPEEEDESILDTVIKYLPGPLQDMFKK</sequence>
<evidence type="ECO:0000250" key="1"/>
<evidence type="ECO:0000250" key="2">
    <source>
        <dbReference type="UniProtKB" id="O14810"/>
    </source>
</evidence>
<evidence type="ECO:0000255" key="3"/>
<evidence type="ECO:0000256" key="4">
    <source>
        <dbReference type="SAM" id="MobiDB-lite"/>
    </source>
</evidence>
<evidence type="ECO:0000269" key="5">
    <source>
    </source>
</evidence>
<evidence type="ECO:0000269" key="6">
    <source>
    </source>
</evidence>
<evidence type="ECO:0000269" key="7">
    <source>
    </source>
</evidence>
<evidence type="ECO:0000269" key="8">
    <source>
    </source>
</evidence>
<evidence type="ECO:0000269" key="9">
    <source>
    </source>
</evidence>
<evidence type="ECO:0000303" key="10">
    <source>
    </source>
</evidence>
<evidence type="ECO:0000305" key="11"/>
<keyword id="KW-0966">Cell projection</keyword>
<keyword id="KW-0175">Coiled coil</keyword>
<keyword id="KW-0963">Cytoplasm</keyword>
<keyword id="KW-0268">Exocytosis</keyword>
<keyword id="KW-0532">Neurotransmitter transport</keyword>
<keyword id="KW-1185">Reference proteome</keyword>
<keyword id="KW-0770">Synapse</keyword>
<keyword id="KW-0813">Transport</keyword>
<comment type="function">
    <text evidence="5 7 8">Positively regulates a late step in exocytosis of various cytoplasmic vesicles, such as synaptic vesicles and other secretory vesicles (PubMed:23345244). Organizes the SNAREs into a cross-linked zigzag topology that, when interposed between the vesicle and plasma membranes, is incompatible with fusion, thereby preventing SNAREs from releasing neurotransmitters until an action potential arrives at the synapse (PubMed:23345244). Also involved in glucose-induced secretion of insulin by pancreatic beta-cells. Essential for motor behavior (PubMed:15126625, PubMed:16000319).</text>
</comment>
<comment type="subunit">
    <text evidence="2">Binds to the SNARE core complex containing SNAP25, VAMP2 and STX1A.</text>
</comment>
<comment type="subcellular location">
    <subcellularLocation>
        <location evidence="5 9">Cytoplasm</location>
        <location evidence="5 9">Cytosol</location>
    </subcellularLocation>
    <subcellularLocation>
        <location evidence="9">Perikaryon</location>
    </subcellularLocation>
    <subcellularLocation>
        <location evidence="9">Presynapse</location>
    </subcellularLocation>
    <text evidence="9">Enriched at synaptic-releasing sites in mature neurons.</text>
</comment>
<comment type="tissue specificity">
    <text evidence="5 6 9">Nervous system, and pancreatic islet cells. Present in many brain regions, including hippocampus and cerebellum. In the retina, present at conventional amacrine cell synapses (at protein level).</text>
</comment>
<comment type="developmental stage">
    <text evidence="6">In the brain, expression starts at P6 and increases to reach a plateau at P20.</text>
</comment>
<comment type="disruption phenotype">
    <text evidence="7">Mice have no obvious brain abnormality, but suffer from severe ataxia with dystonia starting from P7. Adult mice lacking Cplx1 are not capable of coordinated running or swimming and exhibit pronounced resting tremor. They also fail to habituate to confinement and have reduced exploration abilities in open field.</text>
</comment>
<comment type="similarity">
    <text evidence="11">Belongs to the complexin/synaphin family.</text>
</comment>
<name>CPLX1_MOUSE</name>
<organism>
    <name type="scientific">Mus musculus</name>
    <name type="common">Mouse</name>
    <dbReference type="NCBI Taxonomy" id="10090"/>
    <lineage>
        <taxon>Eukaryota</taxon>
        <taxon>Metazoa</taxon>
        <taxon>Chordata</taxon>
        <taxon>Craniata</taxon>
        <taxon>Vertebrata</taxon>
        <taxon>Euteleostomi</taxon>
        <taxon>Mammalia</taxon>
        <taxon>Eutheria</taxon>
        <taxon>Euarchontoglires</taxon>
        <taxon>Glires</taxon>
        <taxon>Rodentia</taxon>
        <taxon>Myomorpha</taxon>
        <taxon>Muroidea</taxon>
        <taxon>Muridae</taxon>
        <taxon>Murinae</taxon>
        <taxon>Mus</taxon>
        <taxon>Mus</taxon>
    </lineage>
</organism>
<proteinExistence type="evidence at protein level"/>
<gene>
    <name type="primary">Cplx1</name>
</gene>
<feature type="chain" id="PRO_0000144871" description="Complexin-1">
    <location>
        <begin position="1"/>
        <end position="134"/>
    </location>
</feature>
<feature type="region of interest" description="Disordered" evidence="4">
    <location>
        <begin position="1"/>
        <end position="60"/>
    </location>
</feature>
<feature type="region of interest" description="Interaction with the SNARE complex" evidence="1">
    <location>
        <begin position="48"/>
        <end position="70"/>
    </location>
</feature>
<feature type="region of interest" description="Disordered" evidence="4">
    <location>
        <begin position="74"/>
        <end position="114"/>
    </location>
</feature>
<feature type="coiled-coil region" evidence="3">
    <location>
        <begin position="29"/>
        <end position="64"/>
    </location>
</feature>
<feature type="compositionally biased region" description="Basic and acidic residues" evidence="4">
    <location>
        <begin position="15"/>
        <end position="60"/>
    </location>
</feature>
<feature type="sequence conflict" description="In Ref. 3; AAH14803." evidence="11" ref="3">
    <original>A</original>
    <variation>V</variation>
    <location>
        <position position="84"/>
    </location>
</feature>
<dbReference type="EMBL" id="D38614">
    <property type="protein sequence ID" value="BAA07605.1"/>
    <property type="molecule type" value="mRNA"/>
</dbReference>
<dbReference type="EMBL" id="AK134820">
    <property type="protein sequence ID" value="BAE22299.1"/>
    <property type="molecule type" value="mRNA"/>
</dbReference>
<dbReference type="EMBL" id="AK158166">
    <property type="protein sequence ID" value="BAE34390.1"/>
    <property type="molecule type" value="mRNA"/>
</dbReference>
<dbReference type="EMBL" id="AK159026">
    <property type="protein sequence ID" value="BAE34774.1"/>
    <property type="molecule type" value="mRNA"/>
</dbReference>
<dbReference type="EMBL" id="BC014803">
    <property type="protein sequence ID" value="AAH14803.1"/>
    <property type="molecule type" value="mRNA"/>
</dbReference>
<dbReference type="CCDS" id="CCDS39206.1"/>
<dbReference type="PIR" id="S66294">
    <property type="entry name" value="S66294"/>
</dbReference>
<dbReference type="RefSeq" id="NP_031782.3">
    <property type="nucleotide sequence ID" value="NM_007756.3"/>
</dbReference>
<dbReference type="BMRB" id="P63040"/>
<dbReference type="SMR" id="P63040"/>
<dbReference type="BioGRID" id="198859">
    <property type="interactions" value="10"/>
</dbReference>
<dbReference type="CORUM" id="P63040"/>
<dbReference type="FunCoup" id="P63040">
    <property type="interactions" value="398"/>
</dbReference>
<dbReference type="STRING" id="10090.ENSMUSP00000038502"/>
<dbReference type="iPTMnet" id="P63040"/>
<dbReference type="PhosphoSitePlus" id="P63040"/>
<dbReference type="SwissPalm" id="P63040"/>
<dbReference type="PaxDb" id="10090-ENSMUSP00000038502"/>
<dbReference type="PeptideAtlas" id="P63040"/>
<dbReference type="ProteomicsDB" id="285290"/>
<dbReference type="Antibodypedia" id="22160">
    <property type="antibodies" value="170 antibodies from 25 providers"/>
</dbReference>
<dbReference type="DNASU" id="12889"/>
<dbReference type="Ensembl" id="ENSMUST00000046892.10">
    <property type="protein sequence ID" value="ENSMUSP00000038502.10"/>
    <property type="gene ID" value="ENSMUSG00000033615.10"/>
</dbReference>
<dbReference type="GeneID" id="12889"/>
<dbReference type="KEGG" id="mmu:12889"/>
<dbReference type="UCSC" id="uc008yof.2">
    <property type="organism name" value="mouse"/>
</dbReference>
<dbReference type="AGR" id="MGI:104727"/>
<dbReference type="CTD" id="10815"/>
<dbReference type="MGI" id="MGI:104727">
    <property type="gene designation" value="Cplx1"/>
</dbReference>
<dbReference type="VEuPathDB" id="HostDB:ENSMUSG00000033615"/>
<dbReference type="eggNOG" id="ENOG502S3I2">
    <property type="taxonomic scope" value="Eukaryota"/>
</dbReference>
<dbReference type="GeneTree" id="ENSGT00950000182938"/>
<dbReference type="HOGENOM" id="CLU_132159_1_0_1"/>
<dbReference type="InParanoid" id="P63040"/>
<dbReference type="OMA" id="MGATKDM"/>
<dbReference type="PhylomeDB" id="P63040"/>
<dbReference type="TreeFam" id="TF315172"/>
<dbReference type="Reactome" id="R-MMU-181429">
    <property type="pathway name" value="Serotonin Neurotransmitter Release Cycle"/>
</dbReference>
<dbReference type="Reactome" id="R-MMU-181430">
    <property type="pathway name" value="Norepinephrine Neurotransmitter Release Cycle"/>
</dbReference>
<dbReference type="Reactome" id="R-MMU-210500">
    <property type="pathway name" value="Glutamate Neurotransmitter Release Cycle"/>
</dbReference>
<dbReference type="Reactome" id="R-MMU-212676">
    <property type="pathway name" value="Dopamine Neurotransmitter Release Cycle"/>
</dbReference>
<dbReference type="Reactome" id="R-MMU-264642">
    <property type="pathway name" value="Acetylcholine Neurotransmitter Release Cycle"/>
</dbReference>
<dbReference type="Reactome" id="R-MMU-888590">
    <property type="pathway name" value="GABA synthesis, release, reuptake and degradation"/>
</dbReference>
<dbReference type="BioGRID-ORCS" id="12889">
    <property type="hits" value="5 hits in 78 CRISPR screens"/>
</dbReference>
<dbReference type="ChiTaRS" id="Cplx1">
    <property type="organism name" value="mouse"/>
</dbReference>
<dbReference type="PRO" id="PR:P63040"/>
<dbReference type="Proteomes" id="UP000000589">
    <property type="component" value="Chromosome 5"/>
</dbReference>
<dbReference type="RNAct" id="P63040">
    <property type="molecule type" value="protein"/>
</dbReference>
<dbReference type="Bgee" id="ENSMUSG00000033615">
    <property type="expression patterns" value="Expressed in motor neuron and 190 other cell types or tissues"/>
</dbReference>
<dbReference type="ExpressionAtlas" id="P63040">
    <property type="expression patterns" value="baseline and differential"/>
</dbReference>
<dbReference type="GO" id="GO:0044305">
    <property type="term" value="C:calyx of Held"/>
    <property type="evidence" value="ECO:0000314"/>
    <property type="project" value="SynGO"/>
</dbReference>
<dbReference type="GO" id="GO:0005829">
    <property type="term" value="C:cytosol"/>
    <property type="evidence" value="ECO:0007669"/>
    <property type="project" value="UniProtKB-SubCell"/>
</dbReference>
<dbReference type="GO" id="GO:0030425">
    <property type="term" value="C:dendrite"/>
    <property type="evidence" value="ECO:0000266"/>
    <property type="project" value="MGI"/>
</dbReference>
<dbReference type="GO" id="GO:0098978">
    <property type="term" value="C:glutamatergic synapse"/>
    <property type="evidence" value="ECO:0000314"/>
    <property type="project" value="SynGO"/>
</dbReference>
<dbReference type="GO" id="GO:0043025">
    <property type="term" value="C:neuronal cell body"/>
    <property type="evidence" value="ECO:0000266"/>
    <property type="project" value="MGI"/>
</dbReference>
<dbReference type="GO" id="GO:0043204">
    <property type="term" value="C:perikaryon"/>
    <property type="evidence" value="ECO:0007669"/>
    <property type="project" value="UniProtKB-SubCell"/>
</dbReference>
<dbReference type="GO" id="GO:0098794">
    <property type="term" value="C:postsynapse"/>
    <property type="evidence" value="ECO:0000314"/>
    <property type="project" value="SynGO"/>
</dbReference>
<dbReference type="GO" id="GO:0098793">
    <property type="term" value="C:presynapse"/>
    <property type="evidence" value="ECO:0000314"/>
    <property type="project" value="SynGO"/>
</dbReference>
<dbReference type="GO" id="GO:0098685">
    <property type="term" value="C:Schaffer collateral - CA1 synapse"/>
    <property type="evidence" value="ECO:0000314"/>
    <property type="project" value="SynGO"/>
</dbReference>
<dbReference type="GO" id="GO:0031201">
    <property type="term" value="C:SNARE complex"/>
    <property type="evidence" value="ECO:0000314"/>
    <property type="project" value="UniProtKB"/>
</dbReference>
<dbReference type="GO" id="GO:0045202">
    <property type="term" value="C:synapse"/>
    <property type="evidence" value="ECO:0000266"/>
    <property type="project" value="MGI"/>
</dbReference>
<dbReference type="GO" id="GO:0070032">
    <property type="term" value="C:synaptobrevin 2-SNAP-25-syntaxin-1a-complexin I complex"/>
    <property type="evidence" value="ECO:0000266"/>
    <property type="project" value="MGI"/>
</dbReference>
<dbReference type="GO" id="GO:0008289">
    <property type="term" value="F:lipid binding"/>
    <property type="evidence" value="ECO:0000269"/>
    <property type="project" value="DisProt"/>
</dbReference>
<dbReference type="GO" id="GO:0017075">
    <property type="term" value="F:syntaxin-1 binding"/>
    <property type="evidence" value="ECO:0000266"/>
    <property type="project" value="MGI"/>
</dbReference>
<dbReference type="GO" id="GO:0030073">
    <property type="term" value="P:insulin secretion"/>
    <property type="evidence" value="ECO:0000315"/>
    <property type="project" value="UniProtKB"/>
</dbReference>
<dbReference type="GO" id="GO:0099145">
    <property type="term" value="P:regulation of exocytic insertion of neurotransmitter receptor to postsynaptic membrane"/>
    <property type="evidence" value="ECO:0000314"/>
    <property type="project" value="SynGO"/>
</dbReference>
<dbReference type="GO" id="GO:0031630">
    <property type="term" value="P:regulation of synaptic vesicle fusion to presynaptic active zone membrane"/>
    <property type="evidence" value="ECO:0000314"/>
    <property type="project" value="SynGO"/>
</dbReference>
<dbReference type="GO" id="GO:0016079">
    <property type="term" value="P:synaptic vesicle exocytosis"/>
    <property type="evidence" value="ECO:0000315"/>
    <property type="project" value="UniProtKB"/>
</dbReference>
<dbReference type="CDD" id="cd22740">
    <property type="entry name" value="Complexin_NTD"/>
    <property type="match status" value="1"/>
</dbReference>
<dbReference type="FunFam" id="1.20.5.580:FF:000001">
    <property type="entry name" value="Complexin 2"/>
    <property type="match status" value="1"/>
</dbReference>
<dbReference type="Gene3D" id="1.20.5.580">
    <property type="entry name" value="Single Helix bin"/>
    <property type="match status" value="1"/>
</dbReference>
<dbReference type="InterPro" id="IPR008849">
    <property type="entry name" value="Synaphin"/>
</dbReference>
<dbReference type="PANTHER" id="PTHR16705">
    <property type="entry name" value="COMPLEXIN"/>
    <property type="match status" value="1"/>
</dbReference>
<dbReference type="PANTHER" id="PTHR16705:SF6">
    <property type="entry name" value="COMPLEXIN-1"/>
    <property type="match status" value="1"/>
</dbReference>
<dbReference type="Pfam" id="PF05835">
    <property type="entry name" value="Synaphin"/>
    <property type="match status" value="1"/>
</dbReference>
<dbReference type="SUPFAM" id="SSF58038">
    <property type="entry name" value="SNARE fusion complex"/>
    <property type="match status" value="1"/>
</dbReference>
<reference key="1">
    <citation type="journal article" date="1995" name="FEBS Lett.">
        <title>Identification of two highly homologous presynaptic proteins distinctly localized at the dendritic and somatic synapses.</title>
        <authorList>
            <person name="Takahashi S."/>
            <person name="Yamamoto H."/>
            <person name="Matsuda Z."/>
            <person name="Ogawa M."/>
            <person name="Yagyu K."/>
            <person name="Taniguchi T."/>
            <person name="Miyata T."/>
            <person name="Kaba H."/>
            <person name="Higuchi T."/>
            <person name="Okutani F."/>
            <person name="Fujimoto S."/>
        </authorList>
    </citation>
    <scope>NUCLEOTIDE SEQUENCE [MRNA]</scope>
    <scope>TISSUE SPECIFICITY</scope>
    <scope>SUBCELLULAR LOCATION</scope>
    <source>
        <strain>BALB/cJ</strain>
        <tissue>Brain</tissue>
    </source>
</reference>
<reference key="2">
    <citation type="journal article" date="2005" name="Science">
        <title>The transcriptional landscape of the mammalian genome.</title>
        <authorList>
            <person name="Carninci P."/>
            <person name="Kasukawa T."/>
            <person name="Katayama S."/>
            <person name="Gough J."/>
            <person name="Frith M.C."/>
            <person name="Maeda N."/>
            <person name="Oyama R."/>
            <person name="Ravasi T."/>
            <person name="Lenhard B."/>
            <person name="Wells C."/>
            <person name="Kodzius R."/>
            <person name="Shimokawa K."/>
            <person name="Bajic V.B."/>
            <person name="Brenner S.E."/>
            <person name="Batalov S."/>
            <person name="Forrest A.R."/>
            <person name="Zavolan M."/>
            <person name="Davis M.J."/>
            <person name="Wilming L.G."/>
            <person name="Aidinis V."/>
            <person name="Allen J.E."/>
            <person name="Ambesi-Impiombato A."/>
            <person name="Apweiler R."/>
            <person name="Aturaliya R.N."/>
            <person name="Bailey T.L."/>
            <person name="Bansal M."/>
            <person name="Baxter L."/>
            <person name="Beisel K.W."/>
            <person name="Bersano T."/>
            <person name="Bono H."/>
            <person name="Chalk A.M."/>
            <person name="Chiu K.P."/>
            <person name="Choudhary V."/>
            <person name="Christoffels A."/>
            <person name="Clutterbuck D.R."/>
            <person name="Crowe M.L."/>
            <person name="Dalla E."/>
            <person name="Dalrymple B.P."/>
            <person name="de Bono B."/>
            <person name="Della Gatta G."/>
            <person name="di Bernardo D."/>
            <person name="Down T."/>
            <person name="Engstrom P."/>
            <person name="Fagiolini M."/>
            <person name="Faulkner G."/>
            <person name="Fletcher C.F."/>
            <person name="Fukushima T."/>
            <person name="Furuno M."/>
            <person name="Futaki S."/>
            <person name="Gariboldi M."/>
            <person name="Georgii-Hemming P."/>
            <person name="Gingeras T.R."/>
            <person name="Gojobori T."/>
            <person name="Green R.E."/>
            <person name="Gustincich S."/>
            <person name="Harbers M."/>
            <person name="Hayashi Y."/>
            <person name="Hensch T.K."/>
            <person name="Hirokawa N."/>
            <person name="Hill D."/>
            <person name="Huminiecki L."/>
            <person name="Iacono M."/>
            <person name="Ikeo K."/>
            <person name="Iwama A."/>
            <person name="Ishikawa T."/>
            <person name="Jakt M."/>
            <person name="Kanapin A."/>
            <person name="Katoh M."/>
            <person name="Kawasawa Y."/>
            <person name="Kelso J."/>
            <person name="Kitamura H."/>
            <person name="Kitano H."/>
            <person name="Kollias G."/>
            <person name="Krishnan S.P."/>
            <person name="Kruger A."/>
            <person name="Kummerfeld S.K."/>
            <person name="Kurochkin I.V."/>
            <person name="Lareau L.F."/>
            <person name="Lazarevic D."/>
            <person name="Lipovich L."/>
            <person name="Liu J."/>
            <person name="Liuni S."/>
            <person name="McWilliam S."/>
            <person name="Madan Babu M."/>
            <person name="Madera M."/>
            <person name="Marchionni L."/>
            <person name="Matsuda H."/>
            <person name="Matsuzawa S."/>
            <person name="Miki H."/>
            <person name="Mignone F."/>
            <person name="Miyake S."/>
            <person name="Morris K."/>
            <person name="Mottagui-Tabar S."/>
            <person name="Mulder N."/>
            <person name="Nakano N."/>
            <person name="Nakauchi H."/>
            <person name="Ng P."/>
            <person name="Nilsson R."/>
            <person name="Nishiguchi S."/>
            <person name="Nishikawa S."/>
            <person name="Nori F."/>
            <person name="Ohara O."/>
            <person name="Okazaki Y."/>
            <person name="Orlando V."/>
            <person name="Pang K.C."/>
            <person name="Pavan W.J."/>
            <person name="Pavesi G."/>
            <person name="Pesole G."/>
            <person name="Petrovsky N."/>
            <person name="Piazza S."/>
            <person name="Reed J."/>
            <person name="Reid J.F."/>
            <person name="Ring B.Z."/>
            <person name="Ringwald M."/>
            <person name="Rost B."/>
            <person name="Ruan Y."/>
            <person name="Salzberg S.L."/>
            <person name="Sandelin A."/>
            <person name="Schneider C."/>
            <person name="Schoenbach C."/>
            <person name="Sekiguchi K."/>
            <person name="Semple C.A."/>
            <person name="Seno S."/>
            <person name="Sessa L."/>
            <person name="Sheng Y."/>
            <person name="Shibata Y."/>
            <person name="Shimada H."/>
            <person name="Shimada K."/>
            <person name="Silva D."/>
            <person name="Sinclair B."/>
            <person name="Sperling S."/>
            <person name="Stupka E."/>
            <person name="Sugiura K."/>
            <person name="Sultana R."/>
            <person name="Takenaka Y."/>
            <person name="Taki K."/>
            <person name="Tammoja K."/>
            <person name="Tan S.L."/>
            <person name="Tang S."/>
            <person name="Taylor M.S."/>
            <person name="Tegner J."/>
            <person name="Teichmann S.A."/>
            <person name="Ueda H.R."/>
            <person name="van Nimwegen E."/>
            <person name="Verardo R."/>
            <person name="Wei C.L."/>
            <person name="Yagi K."/>
            <person name="Yamanishi H."/>
            <person name="Zabarovsky E."/>
            <person name="Zhu S."/>
            <person name="Zimmer A."/>
            <person name="Hide W."/>
            <person name="Bult C."/>
            <person name="Grimmond S.M."/>
            <person name="Teasdale R.D."/>
            <person name="Liu E.T."/>
            <person name="Brusic V."/>
            <person name="Quackenbush J."/>
            <person name="Wahlestedt C."/>
            <person name="Mattick J.S."/>
            <person name="Hume D.A."/>
            <person name="Kai C."/>
            <person name="Sasaki D."/>
            <person name="Tomaru Y."/>
            <person name="Fukuda S."/>
            <person name="Kanamori-Katayama M."/>
            <person name="Suzuki M."/>
            <person name="Aoki J."/>
            <person name="Arakawa T."/>
            <person name="Iida J."/>
            <person name="Imamura K."/>
            <person name="Itoh M."/>
            <person name="Kato T."/>
            <person name="Kawaji H."/>
            <person name="Kawagashira N."/>
            <person name="Kawashima T."/>
            <person name="Kojima M."/>
            <person name="Kondo S."/>
            <person name="Konno H."/>
            <person name="Nakano K."/>
            <person name="Ninomiya N."/>
            <person name="Nishio T."/>
            <person name="Okada M."/>
            <person name="Plessy C."/>
            <person name="Shibata K."/>
            <person name="Shiraki T."/>
            <person name="Suzuki S."/>
            <person name="Tagami M."/>
            <person name="Waki K."/>
            <person name="Watahiki A."/>
            <person name="Okamura-Oho Y."/>
            <person name="Suzuki H."/>
            <person name="Kawai J."/>
            <person name="Hayashizaki Y."/>
        </authorList>
    </citation>
    <scope>NUCLEOTIDE SEQUENCE [LARGE SCALE MRNA]</scope>
    <source>
        <strain>C57BL/6J</strain>
        <tissue>Inner ear</tissue>
        <tissue>Medulla oblongata</tissue>
        <tissue>Visual cortex</tissue>
    </source>
</reference>
<reference key="3">
    <citation type="journal article" date="2004" name="Genome Res.">
        <title>The status, quality, and expansion of the NIH full-length cDNA project: the Mammalian Gene Collection (MGC).</title>
        <authorList>
            <consortium name="The MGC Project Team"/>
        </authorList>
    </citation>
    <scope>NUCLEOTIDE SEQUENCE [LARGE SCALE MRNA]</scope>
    <source>
        <tissue>Eye</tissue>
    </source>
</reference>
<reference key="4">
    <citation type="journal article" date="2004" name="J. Cell Sci.">
        <title>Complexin I regulates glucose-induced secretion in pancreatic beta-cells.</title>
        <authorList>
            <person name="Abderrahmani A."/>
            <person name="Niederhauser G."/>
            <person name="Plaisance V."/>
            <person name="Roehrich M.-E."/>
            <person name="Lenain V."/>
            <person name="Coppola T."/>
            <person name="Regazzi R."/>
            <person name="Waeber G."/>
        </authorList>
    </citation>
    <scope>TISSUE SPECIFICITY</scope>
    <scope>SUBCELLULAR LOCATION</scope>
    <scope>FUNCTION</scope>
</reference>
<reference key="5">
    <citation type="journal article" date="2005" name="Hum. Mol. Genet.">
        <title>Profound ataxia in complexin I knockout mice masks a complex phenotype that includes exploratory and habituation deficits.</title>
        <authorList>
            <person name="Glynn D."/>
            <person name="Drew C.J."/>
            <person name="Reim K."/>
            <person name="Brose N."/>
            <person name="Morton A.J."/>
        </authorList>
    </citation>
    <scope>FUNCTION</scope>
    <scope>DISRUPTION PHENOTYPE</scope>
</reference>
<reference key="6">
    <citation type="journal article" date="2005" name="J. Cell Biol.">
        <title>Structurally and functionally unique complexins at retinal ribbon synapses.</title>
        <authorList>
            <person name="Reim K."/>
            <person name="Wegmeyer H."/>
            <person name="Brandstaetter J.H."/>
            <person name="Xue M."/>
            <person name="Rosenmund C."/>
            <person name="Dresbach T."/>
            <person name="Hofmann K."/>
            <person name="Brose N."/>
        </authorList>
    </citation>
    <scope>TISSUE SPECIFICITY</scope>
    <scope>DEVELOPMENTAL STAGE</scope>
</reference>
<reference key="7">
    <citation type="journal article" date="2010" name="Cell">
        <title>A tissue-specific atlas of mouse protein phosphorylation and expression.</title>
        <authorList>
            <person name="Huttlin E.L."/>
            <person name="Jedrychowski M.P."/>
            <person name="Elias J.E."/>
            <person name="Goswami T."/>
            <person name="Rad R."/>
            <person name="Beausoleil S.A."/>
            <person name="Villen J."/>
            <person name="Haas W."/>
            <person name="Sowa M.E."/>
            <person name="Gygi S.P."/>
        </authorList>
    </citation>
    <scope>IDENTIFICATION BY MASS SPECTROMETRY [LARGE SCALE ANALYSIS]</scope>
    <source>
        <tissue>Brain</tissue>
    </source>
</reference>
<reference key="8">
    <citation type="journal article" date="2013" name="J. Neurosci.">
        <title>Complexin activates exocytosis of distinct secretory vesicles controlled by different synaptotagmins.</title>
        <authorList>
            <person name="Cao P."/>
            <person name="Yang X."/>
            <person name="Suedhof T.C."/>
        </authorList>
    </citation>
    <scope>FUNCTION</scope>
</reference>
<protein>
    <recommendedName>
        <fullName>Complexin-1</fullName>
    </recommendedName>
    <alternativeName>
        <fullName evidence="10">921-S</fullName>
    </alternativeName>
    <alternativeName>
        <fullName>Complexin I</fullName>
        <shortName>CPX I</shortName>
    </alternativeName>
    <alternativeName>
        <fullName>Synaphin-2</fullName>
    </alternativeName>
</protein>
<accession>P63040</accession>
<accession>O09057</accession>
<accession>O09142</accession>
<accession>Q3UYB3</accession>
<accession>Q64276</accession>
<accession>Q91WJ3</accession>